<dbReference type="EMBL" id="AL939114">
    <property type="protein sequence ID" value="CAB72212.1"/>
    <property type="molecule type" value="Genomic_DNA"/>
</dbReference>
<dbReference type="RefSeq" id="NP_627190.1">
    <property type="nucleotide sequence ID" value="NC_003888.3"/>
</dbReference>
<dbReference type="RefSeq" id="WP_003975846.1">
    <property type="nucleotide sequence ID" value="NZ_VNID01000010.1"/>
</dbReference>
<dbReference type="SMR" id="Q9L1S9"/>
<dbReference type="FunCoup" id="Q9L1S9">
    <property type="interactions" value="69"/>
</dbReference>
<dbReference type="STRING" id="100226.gene:17760578"/>
<dbReference type="PaxDb" id="100226-SCO2966"/>
<dbReference type="GeneID" id="91386028"/>
<dbReference type="KEGG" id="sco:SCO2966"/>
<dbReference type="PATRIC" id="fig|100226.15.peg.3024"/>
<dbReference type="eggNOG" id="COG0691">
    <property type="taxonomic scope" value="Bacteria"/>
</dbReference>
<dbReference type="HOGENOM" id="CLU_108953_2_1_11"/>
<dbReference type="InParanoid" id="Q9L1S9"/>
<dbReference type="OrthoDB" id="9805462at2"/>
<dbReference type="PhylomeDB" id="Q9L1S9"/>
<dbReference type="Proteomes" id="UP000001973">
    <property type="component" value="Chromosome"/>
</dbReference>
<dbReference type="GO" id="GO:0005829">
    <property type="term" value="C:cytosol"/>
    <property type="evidence" value="ECO:0000318"/>
    <property type="project" value="GO_Central"/>
</dbReference>
<dbReference type="GO" id="GO:0003723">
    <property type="term" value="F:RNA binding"/>
    <property type="evidence" value="ECO:0000318"/>
    <property type="project" value="GO_Central"/>
</dbReference>
<dbReference type="GO" id="GO:0070929">
    <property type="term" value="P:trans-translation"/>
    <property type="evidence" value="ECO:0007669"/>
    <property type="project" value="UniProtKB-UniRule"/>
</dbReference>
<dbReference type="CDD" id="cd09294">
    <property type="entry name" value="SmpB"/>
    <property type="match status" value="1"/>
</dbReference>
<dbReference type="Gene3D" id="2.40.280.10">
    <property type="match status" value="1"/>
</dbReference>
<dbReference type="HAMAP" id="MF_00023">
    <property type="entry name" value="SmpB"/>
    <property type="match status" value="1"/>
</dbReference>
<dbReference type="InterPro" id="IPR023620">
    <property type="entry name" value="SmpB"/>
</dbReference>
<dbReference type="InterPro" id="IPR000037">
    <property type="entry name" value="SsrA-bd_prot"/>
</dbReference>
<dbReference type="InterPro" id="IPR020081">
    <property type="entry name" value="SsrA-bd_prot_CS"/>
</dbReference>
<dbReference type="NCBIfam" id="NF003843">
    <property type="entry name" value="PRK05422.1"/>
    <property type="match status" value="1"/>
</dbReference>
<dbReference type="NCBIfam" id="TIGR00086">
    <property type="entry name" value="smpB"/>
    <property type="match status" value="1"/>
</dbReference>
<dbReference type="PANTHER" id="PTHR30308:SF2">
    <property type="entry name" value="SSRA-BINDING PROTEIN"/>
    <property type="match status" value="1"/>
</dbReference>
<dbReference type="PANTHER" id="PTHR30308">
    <property type="entry name" value="TMRNA-BINDING COMPONENT OF TRANS-TRANSLATION TAGGING COMPLEX"/>
    <property type="match status" value="1"/>
</dbReference>
<dbReference type="Pfam" id="PF01668">
    <property type="entry name" value="SmpB"/>
    <property type="match status" value="1"/>
</dbReference>
<dbReference type="SUPFAM" id="SSF74982">
    <property type="entry name" value="Small protein B (SmpB)"/>
    <property type="match status" value="1"/>
</dbReference>
<dbReference type="PROSITE" id="PS01317">
    <property type="entry name" value="SSRP"/>
    <property type="match status" value="1"/>
</dbReference>
<accession>Q9L1S9</accession>
<comment type="function">
    <text evidence="1">Required for rescue of stalled ribosomes mediated by trans-translation. Binds to transfer-messenger RNA (tmRNA), required for stable association of tmRNA with ribosomes. tmRNA and SmpB together mimic tRNA shape, replacing the anticodon stem-loop with SmpB. tmRNA is encoded by the ssrA gene; the 2 termini fold to resemble tRNA(Ala) and it encodes a 'tag peptide', a short internal open reading frame. During trans-translation Ala-aminoacylated tmRNA acts like a tRNA, entering the A-site of stalled ribosomes, displacing the stalled mRNA. The ribosome then switches to translate the ORF on the tmRNA; the nascent peptide is terminated with the 'tag peptide' encoded by the tmRNA and targeted for degradation. The ribosome is freed to recommence translation, which seems to be the essential function of trans-translation.</text>
</comment>
<comment type="subcellular location">
    <subcellularLocation>
        <location evidence="1">Cytoplasm</location>
    </subcellularLocation>
    <text evidence="1">The tmRNA-SmpB complex associates with stalled 70S ribosomes.</text>
</comment>
<comment type="similarity">
    <text evidence="1">Belongs to the SmpB family.</text>
</comment>
<reference key="1">
    <citation type="journal article" date="2002" name="Nature">
        <title>Complete genome sequence of the model actinomycete Streptomyces coelicolor A3(2).</title>
        <authorList>
            <person name="Bentley S.D."/>
            <person name="Chater K.F."/>
            <person name="Cerdeno-Tarraga A.-M."/>
            <person name="Challis G.L."/>
            <person name="Thomson N.R."/>
            <person name="James K.D."/>
            <person name="Harris D.E."/>
            <person name="Quail M.A."/>
            <person name="Kieser H."/>
            <person name="Harper D."/>
            <person name="Bateman A."/>
            <person name="Brown S."/>
            <person name="Chandra G."/>
            <person name="Chen C.W."/>
            <person name="Collins M."/>
            <person name="Cronin A."/>
            <person name="Fraser A."/>
            <person name="Goble A."/>
            <person name="Hidalgo J."/>
            <person name="Hornsby T."/>
            <person name="Howarth S."/>
            <person name="Huang C.-H."/>
            <person name="Kieser T."/>
            <person name="Larke L."/>
            <person name="Murphy L.D."/>
            <person name="Oliver K."/>
            <person name="O'Neil S."/>
            <person name="Rabbinowitsch E."/>
            <person name="Rajandream M.A."/>
            <person name="Rutherford K.M."/>
            <person name="Rutter S."/>
            <person name="Seeger K."/>
            <person name="Saunders D."/>
            <person name="Sharp S."/>
            <person name="Squares R."/>
            <person name="Squares S."/>
            <person name="Taylor K."/>
            <person name="Warren T."/>
            <person name="Wietzorrek A."/>
            <person name="Woodward J.R."/>
            <person name="Barrell B.G."/>
            <person name="Parkhill J."/>
            <person name="Hopwood D.A."/>
        </authorList>
    </citation>
    <scope>NUCLEOTIDE SEQUENCE [LARGE SCALE GENOMIC DNA]</scope>
    <source>
        <strain>ATCC BAA-471 / A3(2) / M145</strain>
    </source>
</reference>
<gene>
    <name evidence="1" type="primary">smpB</name>
    <name type="ordered locus">SCO2966</name>
    <name type="ORF">SCE59.25c</name>
</gene>
<organism>
    <name type="scientific">Streptomyces coelicolor (strain ATCC BAA-471 / A3(2) / M145)</name>
    <dbReference type="NCBI Taxonomy" id="100226"/>
    <lineage>
        <taxon>Bacteria</taxon>
        <taxon>Bacillati</taxon>
        <taxon>Actinomycetota</taxon>
        <taxon>Actinomycetes</taxon>
        <taxon>Kitasatosporales</taxon>
        <taxon>Streptomycetaceae</taxon>
        <taxon>Streptomyces</taxon>
        <taxon>Streptomyces albidoflavus group</taxon>
    </lineage>
</organism>
<sequence length="159" mass="18381">MAKEKGRKLIAQNKKARHDYQILDTYEAGLVLSGTEVKSLRQGRASLADGFVQLDGHEAWLHNVHVPEYSQGTWTNHSARRKRKLLLHRVEIDKLESKSQETGHTIVPLALYFKDGRAKVEIALARGKKEYDKRQTLREKQDRREAERTISAIKRKQRA</sequence>
<proteinExistence type="inferred from homology"/>
<protein>
    <recommendedName>
        <fullName evidence="1">SsrA-binding protein</fullName>
    </recommendedName>
    <alternativeName>
        <fullName evidence="1">Small protein B</fullName>
    </alternativeName>
</protein>
<name>SSRP_STRCO</name>
<feature type="chain" id="PRO_0000103039" description="SsrA-binding protein">
    <location>
        <begin position="1"/>
        <end position="159"/>
    </location>
</feature>
<feature type="region of interest" description="Disordered" evidence="2">
    <location>
        <begin position="131"/>
        <end position="159"/>
    </location>
</feature>
<feature type="compositionally biased region" description="Basic and acidic residues" evidence="2">
    <location>
        <begin position="131"/>
        <end position="148"/>
    </location>
</feature>
<keyword id="KW-0963">Cytoplasm</keyword>
<keyword id="KW-1185">Reference proteome</keyword>
<keyword id="KW-0694">RNA-binding</keyword>
<evidence type="ECO:0000255" key="1">
    <source>
        <dbReference type="HAMAP-Rule" id="MF_00023"/>
    </source>
</evidence>
<evidence type="ECO:0000256" key="2">
    <source>
        <dbReference type="SAM" id="MobiDB-lite"/>
    </source>
</evidence>